<protein>
    <recommendedName>
        <fullName>Protein three rows</fullName>
    </recommendedName>
</protein>
<sequence length="1379" mass="157511">MSTDIATQLKGSRSDVEKVRKTVEAKFRELSGDGLPLRYEVNVLRHICLALKDNLHQNSDLYCDIMGIMLPRVVPCEEKPSLWEAHLSSLRYIHHGLFHQRSIEACQKLYNLIRQQPCRLQEESDYKIYLDIHLTHFNGFHVLLQKQKLPLEATSQLCYALESLGDLFAAMTQRQISLCATLLVQLNESLFGKRSRSFFKSLSFLPSESLAKMFNALLMLLASSTSSNLANLFPECLSLTLALVQIDMFSPQSNQQMSLQLLRMSKELFRQESNLCYALQLMYYYIKLIFVREPTGDFKRTYIDLSSKFQHFFEHKVASHAKEQWLADFLVAIQLLQVLIHQSNSKLQSPFQIFWQQFDGESSPEIYTAHFQLLQTCASLAVNITRSPLGCSCSHEACKSVRRHCILAYGLCALDAYINWKPAAEQRANVSPHKPLLGVVKYSMDVAKTMKCLGPTSVEIIKLVRQLTYVADQVTCPEQMSVLLPLLEPLQKLRPLVADQDMSSLLRRLFKASSHCGDSNIACRIQASYLASITNPARLRSQVCLYYHNLGKKGTEIKRCVYEWHESTPLPFPLTPDQKKQLYDTDFFALLHYLRSPSTAHMESLIRCRTSDYHLVLLARQMRKDDSISKKCIEVHDKLRQQRSLSRMDNLCLGHASVGLLLDALEAQKTKVSTKEITENMFEELLLSKNLWQMNIQREQRLVNYASEAISAFSNFFDRADQEPLSANETSIDWEALIDDAIATANALSSMGYQSEEDDAWLLLLRMGRLLEDRFTYLRALNHFLSQNEVSSRLNLKLGEEVEVAEELLDDLWPQLKNGKFFKRQQTTVMLCFCHLASYYARMECYSHAQLLLLHVEQLREEFPERQGKSDIVLLTLQTVRFRIGYQQRKPTNCRLPTPLRQLDILLDNVRSFCNLSSLDGGSLQLLLSTLVRESTECSANRLSERLSFSNIALHLVLQSGLALRAIEVFLAWLWTNLQMESFDKAQSKLRLIEHCLGIKQLNPTSRPEKEAIKDVAISDLASNMHLLQLVEPIRKQQLLNMASPNLLKMRPHSPNPQLDLDRYITLDVAPANLRENSQLQCLYFVTGCLHARLRFLQRNSEQLEEFYGRAHNWMQEKPPMSSALYPMLHAQQLYHLNYLRFARKHVEAISTAQLGLKMRSRAVDINFEYNFLAQLKTAQLELKPVGQDKPQVKILRRALVFNHSPEDKKRTATGSVSAVKNTASKVKQSAKKAPRFRIYEELELRPPSATSCSSSGGSGTENTPPSDHVDLNACQAIEISDDDDSPLVSTKKTQPKSREKAKPKATSKACKVLTLDNSLEIVETPTITTSTRSTRARLRQPVETPKTATLSSKRTRRQVLEAQAPETESISTRTRHRH</sequence>
<feature type="chain" id="PRO_0000072526" description="Protein three rows">
    <location>
        <begin position="1"/>
        <end position="1379"/>
    </location>
</feature>
<feature type="region of interest" description="Separase cleavage-site">
    <location>
        <begin position="1031"/>
        <end position="1037"/>
    </location>
</feature>
<feature type="region of interest" description="Disordered" evidence="1">
    <location>
        <begin position="1206"/>
        <end position="1231"/>
    </location>
</feature>
<feature type="region of interest" description="Disordered" evidence="1">
    <location>
        <begin position="1248"/>
        <end position="1309"/>
    </location>
</feature>
<feature type="region of interest" description="Disordered" evidence="1">
    <location>
        <begin position="1328"/>
        <end position="1379"/>
    </location>
</feature>
<feature type="compositionally biased region" description="Polar residues" evidence="1">
    <location>
        <begin position="1213"/>
        <end position="1228"/>
    </location>
</feature>
<feature type="compositionally biased region" description="Low complexity" evidence="1">
    <location>
        <begin position="1248"/>
        <end position="1267"/>
    </location>
</feature>
<feature type="sequence variant" description="In strain: Berkeley and Oregon-R.">
    <original>S</original>
    <variation>T</variation>
    <location>
        <position position="392"/>
    </location>
</feature>
<feature type="sequence variant" description="In strain: Berkeley and Oregon-R.">
    <original>R</original>
    <variation>K</variation>
    <location>
        <position position="427"/>
    </location>
</feature>
<feature type="sequence variant" description="In strain: Berkeley and Oregon-R.">
    <original>A</original>
    <variation>T</variation>
    <location>
        <position position="428"/>
    </location>
</feature>
<feature type="sequence variant" description="In strain: Canton-S.">
    <original>L</original>
    <variation>P</variation>
    <location>
        <position position="927"/>
    </location>
</feature>
<feature type="mutagenesis site" description="Abolishes proteolytic cleavage." evidence="3">
    <original>R</original>
    <variation>D</variation>
    <location>
        <position position="1035"/>
    </location>
</feature>
<feature type="sequence conflict" description="In Ref. 1." evidence="6" ref="1">
    <original>K</original>
    <variation>N</variation>
    <location>
        <position position="18"/>
    </location>
</feature>
<feature type="sequence conflict" description="In Ref. 1 and 5." evidence="6" ref="1 5">
    <original>A</original>
    <variation>P</variation>
    <location>
        <position position="216"/>
    </location>
</feature>
<feature type="sequence conflict" description="In Ref. 5; AAM75095." evidence="6" ref="5">
    <original>G</original>
    <variation>A</variation>
    <location>
        <position position="296"/>
    </location>
</feature>
<feature type="sequence conflict" description="In Ref. 5; AAM75095." evidence="6" ref="5">
    <original>H</original>
    <variation>N</variation>
    <location>
        <position position="315"/>
    </location>
</feature>
<feature type="sequence conflict" description="In Ref. 5; AAM75095." evidence="6" ref="5">
    <original>S</original>
    <variation>L</variation>
    <location>
        <position position="319"/>
    </location>
</feature>
<feature type="sequence conflict" description="In Ref. 3; AAF57778." evidence="6" ref="3">
    <original>E</original>
    <variation>D</variation>
    <location>
        <position position="365"/>
    </location>
</feature>
<feature type="sequence conflict" description="In Ref. 5; AAM75095." evidence="6" ref="5">
    <original>S</original>
    <variation>N</variation>
    <location>
        <position position="431"/>
    </location>
</feature>
<feature type="sequence conflict" description="In Ref. 1 and 5." evidence="6" ref="1 5">
    <original>K</original>
    <variation>N</variation>
    <location>
        <position position="624"/>
    </location>
</feature>
<feature type="sequence conflict" description="In Ref. 5; AAM75095." evidence="6" ref="5">
    <original>K</original>
    <variation>M</variation>
    <location>
        <position position="630"/>
    </location>
</feature>
<feature type="sequence conflict" description="In Ref. 5; AAM75095." evidence="6" ref="5">
    <original>I</original>
    <variation>M</variation>
    <location>
        <position position="633"/>
    </location>
</feature>
<feature type="sequence conflict" description="In Ref. 5." evidence="6" ref="5">
    <original>D</original>
    <variation>S</variation>
    <location>
        <position position="718"/>
    </location>
</feature>
<feature type="sequence conflict" description="In Ref. 5." evidence="6" ref="5">
    <original>E</original>
    <variation>Q</variation>
    <location>
        <position position="756"/>
    </location>
</feature>
<feature type="sequence conflict" description="In Ref. 5." evidence="6" ref="5">
    <original>N</original>
    <variation>S</variation>
    <location>
        <position position="915"/>
    </location>
</feature>
<feature type="sequence conflict" description="In Ref. 6; AAB60210/AAB29824." evidence="6" ref="6">
    <original>C</original>
    <variation>S</variation>
    <location>
        <position position="938"/>
    </location>
</feature>
<feature type="sequence conflict" description="In Ref. 3; AAF57778." evidence="6" ref="3">
    <original>S</original>
    <variation>R</variation>
    <location>
        <position position="1019"/>
    </location>
</feature>
<feature type="sequence conflict" description="In Ref. 3; AAF57778." evidence="6" ref="3">
    <original>E</original>
    <variation>D</variation>
    <location>
        <position position="1105"/>
    </location>
</feature>
<feature type="sequence conflict" description="In Ref. 3; AAF57778." evidence="6" ref="3">
    <original>N</original>
    <variation>S</variation>
    <location>
        <position position="1113"/>
    </location>
</feature>
<feature type="sequence conflict" description="In Ref. 3; AAF57778." evidence="6" ref="3">
    <original>T</original>
    <variation>I</variation>
    <location>
        <position position="1214"/>
    </location>
</feature>
<dbReference type="EMBL" id="X75374">
    <property type="protein sequence ID" value="CAA53148.1"/>
    <property type="status" value="ALT_SEQ"/>
    <property type="molecule type" value="Genomic_DNA"/>
</dbReference>
<dbReference type="EMBL" id="AE013599">
    <property type="protein sequence ID" value="AAF57778.3"/>
    <property type="molecule type" value="Genomic_DNA"/>
</dbReference>
<dbReference type="EMBL" id="AY128502">
    <property type="protein sequence ID" value="AAM75095.1"/>
    <property type="status" value="ALT_FRAME"/>
    <property type="molecule type" value="mRNA"/>
</dbReference>
<dbReference type="EMBL" id="U03276">
    <property type="protein sequence ID" value="AAB60210.1"/>
    <property type="status" value="ALT_FRAME"/>
    <property type="molecule type" value="Unassigned_DNA"/>
</dbReference>
<dbReference type="EMBL" id="S69585">
    <property type="protein sequence ID" value="AAB29824.1"/>
    <property type="status" value="ALT_FRAME"/>
    <property type="molecule type" value="Genomic_DNA"/>
</dbReference>
<dbReference type="PIR" id="A49440">
    <property type="entry name" value="A49440"/>
</dbReference>
<dbReference type="RefSeq" id="NP_001286552.1">
    <property type="nucleotide sequence ID" value="NM_001299623.1"/>
</dbReference>
<dbReference type="RefSeq" id="NP_725731.2">
    <property type="nucleotide sequence ID" value="NM_166257.2"/>
</dbReference>
<dbReference type="BioGRID" id="62727">
    <property type="interactions" value="7"/>
</dbReference>
<dbReference type="FunCoup" id="P42286">
    <property type="interactions" value="2"/>
</dbReference>
<dbReference type="IntAct" id="P42286">
    <property type="interactions" value="1"/>
</dbReference>
<dbReference type="STRING" id="7227.FBpp0309246"/>
<dbReference type="PaxDb" id="7227-FBpp0086004"/>
<dbReference type="GeneID" id="37042"/>
<dbReference type="KEGG" id="dme:Dmel_CG5785"/>
<dbReference type="AGR" id="FB:FBgn0003701"/>
<dbReference type="CTD" id="37042"/>
<dbReference type="FlyBase" id="FBgn0003701">
    <property type="gene designation" value="thr"/>
</dbReference>
<dbReference type="VEuPathDB" id="VectorBase:FBgn0003701"/>
<dbReference type="eggNOG" id="ENOG502T8T7">
    <property type="taxonomic scope" value="Eukaryota"/>
</dbReference>
<dbReference type="HOGENOM" id="CLU_255337_0_0_1"/>
<dbReference type="InParanoid" id="P42286"/>
<dbReference type="OrthoDB" id="7735752at2759"/>
<dbReference type="BioGRID-ORCS" id="37042">
    <property type="hits" value="0 hits in 1 CRISPR screen"/>
</dbReference>
<dbReference type="GenomeRNAi" id="37042"/>
<dbReference type="PRO" id="PR:P42286"/>
<dbReference type="Proteomes" id="UP000000803">
    <property type="component" value="Chromosome 2R"/>
</dbReference>
<dbReference type="ExpressionAtlas" id="P42286">
    <property type="expression patterns" value="baseline and differential"/>
</dbReference>
<dbReference type="GO" id="GO:0005737">
    <property type="term" value="C:cytoplasm"/>
    <property type="evidence" value="ECO:0000314"/>
    <property type="project" value="UniProtKB"/>
</dbReference>
<dbReference type="GO" id="GO:0051301">
    <property type="term" value="P:cell division"/>
    <property type="evidence" value="ECO:0007669"/>
    <property type="project" value="UniProtKB-KW"/>
</dbReference>
<dbReference type="GO" id="GO:0007502">
    <property type="term" value="P:digestive tract mesoderm development"/>
    <property type="evidence" value="ECO:0000315"/>
    <property type="project" value="FlyBase"/>
</dbReference>
<dbReference type="GO" id="GO:0007440">
    <property type="term" value="P:foregut morphogenesis"/>
    <property type="evidence" value="ECO:0000315"/>
    <property type="project" value="FlyBase"/>
</dbReference>
<dbReference type="GO" id="GO:0008406">
    <property type="term" value="P:gonad development"/>
    <property type="evidence" value="ECO:0000315"/>
    <property type="project" value="FlyBase"/>
</dbReference>
<dbReference type="GO" id="GO:0008258">
    <property type="term" value="P:head involution"/>
    <property type="evidence" value="ECO:0000315"/>
    <property type="project" value="FlyBase"/>
</dbReference>
<dbReference type="GO" id="GO:0007442">
    <property type="term" value="P:hindgut morphogenesis"/>
    <property type="evidence" value="ECO:0000315"/>
    <property type="project" value="FlyBase"/>
</dbReference>
<dbReference type="GO" id="GO:0007443">
    <property type="term" value="P:Malpighian tubule morphogenesis"/>
    <property type="evidence" value="ECO:0000315"/>
    <property type="project" value="FlyBase"/>
</dbReference>
<dbReference type="GO" id="GO:0000070">
    <property type="term" value="P:mitotic sister chromatid segregation"/>
    <property type="evidence" value="ECO:0000304"/>
    <property type="project" value="FlyBase"/>
</dbReference>
<dbReference type="GO" id="GO:0051306">
    <property type="term" value="P:mitotic sister chromatid separation"/>
    <property type="evidence" value="ECO:0000315"/>
    <property type="project" value="FlyBase"/>
</dbReference>
<dbReference type="GO" id="GO:0002009">
    <property type="term" value="P:morphogenesis of an epithelium"/>
    <property type="evidence" value="ECO:0000315"/>
    <property type="project" value="FlyBase"/>
</dbReference>
<dbReference type="GO" id="GO:0007424">
    <property type="term" value="P:open tracheal system development"/>
    <property type="evidence" value="ECO:0000315"/>
    <property type="project" value="FlyBase"/>
</dbReference>
<comment type="function">
    <text evidence="2 3 4 5">Required specifically for chromosome disjunction during all mitoses; maternally provided protein is sufficient until mitosis 14 then zygotic protein is required. Involved in formation and/or maintenance of epithelial structures: bud extension during Malpighian tubule development, and foregut and hindgut morphogenesis.</text>
</comment>
<comment type="subunit">
    <text evidence="2">Interacts with pim and Sse. Cleavage of thr contributes to inactivation of Sse.</text>
</comment>
<comment type="subcellular location">
    <subcellularLocation>
        <location evidence="3">Cytoplasm</location>
    </subcellularLocation>
    <text>Cytoplasmic during interphase and distributed throughout the cell during early mitosis.</text>
</comment>
<comment type="tissue specificity">
    <text evidence="5">During embryogenesis, expressed in Malpighian tubule buds, and epithelia of foregut and hindgut.</text>
</comment>
<comment type="developmental stage">
    <text evidence="4">Expressed both maternally and zygotically.</text>
</comment>
<comment type="PTM">
    <text>Proteolytically cleaved after the metaphase-to-anaphase transition, C-terminal cleavage product is degraded. Cleavage can only proceed within complexes that contain active Sse.</text>
</comment>
<comment type="sequence caution" evidence="6">
    <conflict type="frameshift">
        <sequence resource="EMBL-CDS" id="AAB29824"/>
    </conflict>
</comment>
<comment type="sequence caution" evidence="6">
    <conflict type="frameshift">
        <sequence resource="EMBL-CDS" id="AAB60210"/>
    </conflict>
</comment>
<comment type="sequence caution" evidence="6">
    <conflict type="frameshift">
        <sequence resource="EMBL-CDS" id="AAM75095"/>
    </conflict>
</comment>
<comment type="sequence caution" evidence="6">
    <conflict type="frameshift">
        <sequence resource="EMBL-CDS" id="CAA53148"/>
    </conflict>
</comment>
<comment type="sequence caution" evidence="6">
    <conflict type="miscellaneous discrepancy">
        <sequence resource="EMBL-CDS" id="CAA53148"/>
    </conflict>
    <text>Intron retention.</text>
</comment>
<name>THR_DROME</name>
<proteinExistence type="evidence at protein level"/>
<gene>
    <name type="primary">thr</name>
    <name type="ORF">CG5785</name>
</gene>
<keyword id="KW-0131">Cell cycle</keyword>
<keyword id="KW-0132">Cell division</keyword>
<keyword id="KW-0963">Cytoplasm</keyword>
<keyword id="KW-0217">Developmental protein</keyword>
<keyword id="KW-0498">Mitosis</keyword>
<keyword id="KW-1185">Reference proteome</keyword>
<evidence type="ECO:0000256" key="1">
    <source>
        <dbReference type="SAM" id="MobiDB-lite"/>
    </source>
</evidence>
<evidence type="ECO:0000269" key="2">
    <source>
    </source>
</evidence>
<evidence type="ECO:0000269" key="3">
    <source>
    </source>
</evidence>
<evidence type="ECO:0000269" key="4">
    <source>
    </source>
</evidence>
<evidence type="ECO:0000269" key="5">
    <source>
    </source>
</evidence>
<evidence type="ECO:0000305" key="6"/>
<accession>P42286</accession>
<accession>Q8MQL8</accession>
<accession>Q94525</accession>
<accession>Q9V894</accession>
<reference key="1">
    <citation type="journal article" date="1993" name="J. Cell Sci.">
        <title>Mutations in the Drosophila melanogaster gene three rows permit aspects of mitosis to continue in the absence of chromatid segregation.</title>
        <authorList>
            <person name="Philp A.V."/>
            <person name="Axton J.M."/>
            <person name="Saunders R.D.C."/>
            <person name="Glover D.M."/>
        </authorList>
    </citation>
    <scope>NUCLEOTIDE SEQUENCE [GENOMIC DNA]</scope>
    <scope>FUNCTION</scope>
    <scope>DEVELOPMENTAL STAGE</scope>
    <source>
        <strain>Oregon-R</strain>
    </source>
</reference>
<reference key="2">
    <citation type="journal article" date="1994" name="J. Cell Sci.">
        <authorList>
            <person name="Philp A.V."/>
            <person name="Axton J.M."/>
            <person name="Saunders R.D."/>
            <person name="Glover D.M."/>
        </authorList>
    </citation>
    <scope>ERRATUM OF PUBMED:8270646</scope>
</reference>
<reference key="3">
    <citation type="journal article" date="2000" name="Science">
        <title>The genome sequence of Drosophila melanogaster.</title>
        <authorList>
            <person name="Adams M.D."/>
            <person name="Celniker S.E."/>
            <person name="Holt R.A."/>
            <person name="Evans C.A."/>
            <person name="Gocayne J.D."/>
            <person name="Amanatides P.G."/>
            <person name="Scherer S.E."/>
            <person name="Li P.W."/>
            <person name="Hoskins R.A."/>
            <person name="Galle R.F."/>
            <person name="George R.A."/>
            <person name="Lewis S.E."/>
            <person name="Richards S."/>
            <person name="Ashburner M."/>
            <person name="Henderson S.N."/>
            <person name="Sutton G.G."/>
            <person name="Wortman J.R."/>
            <person name="Yandell M.D."/>
            <person name="Zhang Q."/>
            <person name="Chen L.X."/>
            <person name="Brandon R.C."/>
            <person name="Rogers Y.-H.C."/>
            <person name="Blazej R.G."/>
            <person name="Champe M."/>
            <person name="Pfeiffer B.D."/>
            <person name="Wan K.H."/>
            <person name="Doyle C."/>
            <person name="Baxter E.G."/>
            <person name="Helt G."/>
            <person name="Nelson C.R."/>
            <person name="Miklos G.L.G."/>
            <person name="Abril J.F."/>
            <person name="Agbayani A."/>
            <person name="An H.-J."/>
            <person name="Andrews-Pfannkoch C."/>
            <person name="Baldwin D."/>
            <person name="Ballew R.M."/>
            <person name="Basu A."/>
            <person name="Baxendale J."/>
            <person name="Bayraktaroglu L."/>
            <person name="Beasley E.M."/>
            <person name="Beeson K.Y."/>
            <person name="Benos P.V."/>
            <person name="Berman B.P."/>
            <person name="Bhandari D."/>
            <person name="Bolshakov S."/>
            <person name="Borkova D."/>
            <person name="Botchan M.R."/>
            <person name="Bouck J."/>
            <person name="Brokstein P."/>
            <person name="Brottier P."/>
            <person name="Burtis K.C."/>
            <person name="Busam D.A."/>
            <person name="Butler H."/>
            <person name="Cadieu E."/>
            <person name="Center A."/>
            <person name="Chandra I."/>
            <person name="Cherry J.M."/>
            <person name="Cawley S."/>
            <person name="Dahlke C."/>
            <person name="Davenport L.B."/>
            <person name="Davies P."/>
            <person name="de Pablos B."/>
            <person name="Delcher A."/>
            <person name="Deng Z."/>
            <person name="Mays A.D."/>
            <person name="Dew I."/>
            <person name="Dietz S.M."/>
            <person name="Dodson K."/>
            <person name="Doup L.E."/>
            <person name="Downes M."/>
            <person name="Dugan-Rocha S."/>
            <person name="Dunkov B.C."/>
            <person name="Dunn P."/>
            <person name="Durbin K.J."/>
            <person name="Evangelista C.C."/>
            <person name="Ferraz C."/>
            <person name="Ferriera S."/>
            <person name="Fleischmann W."/>
            <person name="Fosler C."/>
            <person name="Gabrielian A.E."/>
            <person name="Garg N.S."/>
            <person name="Gelbart W.M."/>
            <person name="Glasser K."/>
            <person name="Glodek A."/>
            <person name="Gong F."/>
            <person name="Gorrell J.H."/>
            <person name="Gu Z."/>
            <person name="Guan P."/>
            <person name="Harris M."/>
            <person name="Harris N.L."/>
            <person name="Harvey D.A."/>
            <person name="Heiman T.J."/>
            <person name="Hernandez J.R."/>
            <person name="Houck J."/>
            <person name="Hostin D."/>
            <person name="Houston K.A."/>
            <person name="Howland T.J."/>
            <person name="Wei M.-H."/>
            <person name="Ibegwam C."/>
            <person name="Jalali M."/>
            <person name="Kalush F."/>
            <person name="Karpen G.H."/>
            <person name="Ke Z."/>
            <person name="Kennison J.A."/>
            <person name="Ketchum K.A."/>
            <person name="Kimmel B.E."/>
            <person name="Kodira C.D."/>
            <person name="Kraft C.L."/>
            <person name="Kravitz S."/>
            <person name="Kulp D."/>
            <person name="Lai Z."/>
            <person name="Lasko P."/>
            <person name="Lei Y."/>
            <person name="Levitsky A.A."/>
            <person name="Li J.H."/>
            <person name="Li Z."/>
            <person name="Liang Y."/>
            <person name="Lin X."/>
            <person name="Liu X."/>
            <person name="Mattei B."/>
            <person name="McIntosh T.C."/>
            <person name="McLeod M.P."/>
            <person name="McPherson D."/>
            <person name="Merkulov G."/>
            <person name="Milshina N.V."/>
            <person name="Mobarry C."/>
            <person name="Morris J."/>
            <person name="Moshrefi A."/>
            <person name="Mount S.M."/>
            <person name="Moy M."/>
            <person name="Murphy B."/>
            <person name="Murphy L."/>
            <person name="Muzny D.M."/>
            <person name="Nelson D.L."/>
            <person name="Nelson D.R."/>
            <person name="Nelson K.A."/>
            <person name="Nixon K."/>
            <person name="Nusskern D.R."/>
            <person name="Pacleb J.M."/>
            <person name="Palazzolo M."/>
            <person name="Pittman G.S."/>
            <person name="Pan S."/>
            <person name="Pollard J."/>
            <person name="Puri V."/>
            <person name="Reese M.G."/>
            <person name="Reinert K."/>
            <person name="Remington K."/>
            <person name="Saunders R.D.C."/>
            <person name="Scheeler F."/>
            <person name="Shen H."/>
            <person name="Shue B.C."/>
            <person name="Siden-Kiamos I."/>
            <person name="Simpson M."/>
            <person name="Skupski M.P."/>
            <person name="Smith T.J."/>
            <person name="Spier E."/>
            <person name="Spradling A.C."/>
            <person name="Stapleton M."/>
            <person name="Strong R."/>
            <person name="Sun E."/>
            <person name="Svirskas R."/>
            <person name="Tector C."/>
            <person name="Turner R."/>
            <person name="Venter E."/>
            <person name="Wang A.H."/>
            <person name="Wang X."/>
            <person name="Wang Z.-Y."/>
            <person name="Wassarman D.A."/>
            <person name="Weinstock G.M."/>
            <person name="Weissenbach J."/>
            <person name="Williams S.M."/>
            <person name="Woodage T."/>
            <person name="Worley K.C."/>
            <person name="Wu D."/>
            <person name="Yang S."/>
            <person name="Yao Q.A."/>
            <person name="Ye J."/>
            <person name="Yeh R.-F."/>
            <person name="Zaveri J.S."/>
            <person name="Zhan M."/>
            <person name="Zhang G."/>
            <person name="Zhao Q."/>
            <person name="Zheng L."/>
            <person name="Zheng X.H."/>
            <person name="Zhong F.N."/>
            <person name="Zhong W."/>
            <person name="Zhou X."/>
            <person name="Zhu S.C."/>
            <person name="Zhu X."/>
            <person name="Smith H.O."/>
            <person name="Gibbs R.A."/>
            <person name="Myers E.W."/>
            <person name="Rubin G.M."/>
            <person name="Venter J.C."/>
        </authorList>
    </citation>
    <scope>NUCLEOTIDE SEQUENCE [LARGE SCALE GENOMIC DNA]</scope>
    <source>
        <strain>Berkeley</strain>
    </source>
</reference>
<reference key="4">
    <citation type="journal article" date="2002" name="Genome Biol.">
        <title>Annotation of the Drosophila melanogaster euchromatic genome: a systematic review.</title>
        <authorList>
            <person name="Misra S."/>
            <person name="Crosby M.A."/>
            <person name="Mungall C.J."/>
            <person name="Matthews B.B."/>
            <person name="Campbell K.S."/>
            <person name="Hradecky P."/>
            <person name="Huang Y."/>
            <person name="Kaminker J.S."/>
            <person name="Millburn G.H."/>
            <person name="Prochnik S.E."/>
            <person name="Smith C.D."/>
            <person name="Tupy J.L."/>
            <person name="Whitfield E.J."/>
            <person name="Bayraktaroglu L."/>
            <person name="Berman B.P."/>
            <person name="Bettencourt B.R."/>
            <person name="Celniker S.E."/>
            <person name="de Grey A.D.N.J."/>
            <person name="Drysdale R.A."/>
            <person name="Harris N.L."/>
            <person name="Richter J."/>
            <person name="Russo S."/>
            <person name="Schroeder A.J."/>
            <person name="Shu S.Q."/>
            <person name="Stapleton M."/>
            <person name="Yamada C."/>
            <person name="Ashburner M."/>
            <person name="Gelbart W.M."/>
            <person name="Rubin G.M."/>
            <person name="Lewis S.E."/>
        </authorList>
    </citation>
    <scope>GENOME REANNOTATION</scope>
    <source>
        <strain>Berkeley</strain>
    </source>
</reference>
<reference key="5">
    <citation type="journal article" date="2002" name="Genome Biol.">
        <title>A Drosophila full-length cDNA resource.</title>
        <authorList>
            <person name="Stapleton M."/>
            <person name="Carlson J.W."/>
            <person name="Brokstein P."/>
            <person name="Yu C."/>
            <person name="Champe M."/>
            <person name="George R.A."/>
            <person name="Guarin H."/>
            <person name="Kronmiller B."/>
            <person name="Pacleb J.M."/>
            <person name="Park S."/>
            <person name="Wan K.H."/>
            <person name="Rubin G.M."/>
            <person name="Celniker S.E."/>
        </authorList>
    </citation>
    <scope>NUCLEOTIDE SEQUENCE [LARGE SCALE MRNA]</scope>
    <source>
        <strain>Berkeley</strain>
        <tissue>Embryo</tissue>
    </source>
</reference>
<reference key="6">
    <citation type="journal article" date="1993" name="Mol. Biol. Cell">
        <title>The three rows gene of Drosophila melanogaster encodes a novel protein that is required for chromosome disjunction during mitosis.</title>
        <authorList>
            <person name="D'Andrea R.J."/>
            <person name="Stratmann R."/>
            <person name="Lehner C.F."/>
            <person name="John U.P."/>
            <person name="Saint R."/>
        </authorList>
    </citation>
    <scope>NUCLEOTIDE SEQUENCE [GENOMIC DNA] OF 81-1209</scope>
    <source>
        <strain>Canton-S</strain>
        <strain>Oregon-R</strain>
    </source>
</reference>
<reference key="7">
    <citation type="journal article" date="1999" name="Genetics">
        <title>Identification of genes controlling malpighian tubule and other epithelial morphogenesis in Drosophila melanogaster.</title>
        <authorList>
            <person name="Liu X."/>
            <person name="Kiss I."/>
            <person name="Lengyel J.A."/>
        </authorList>
    </citation>
    <scope>FUNCTION</scope>
    <scope>TISSUE SPECIFICITY</scope>
</reference>
<reference key="8">
    <citation type="journal article" date="2001" name="Genes Dev.">
        <title>Drosophila separase is required for sister chromatid separation and binds to PIM and THR.</title>
        <authorList>
            <person name="Jager H."/>
            <person name="Herzig A."/>
            <person name="Lehner C.F."/>
            <person name="Heidmann S."/>
        </authorList>
    </citation>
    <scope>FUNCTION</scope>
    <scope>INTERACTION WITH PIM AND SSE</scope>
</reference>
<reference key="9">
    <citation type="journal article" date="2002" name="Genes Dev.">
        <title>Proteolytic cleavage of the THR subunit during anaphase limits Drosophila separase function.</title>
        <authorList>
            <person name="Herzig A."/>
            <person name="Lehner C.F."/>
            <person name="Heidmann S."/>
        </authorList>
    </citation>
    <scope>FUNCTION</scope>
    <scope>SUBCELLULAR LOCATION</scope>
    <scope>MUTAGENESIS OF ARG-1035</scope>
</reference>
<organism>
    <name type="scientific">Drosophila melanogaster</name>
    <name type="common">Fruit fly</name>
    <dbReference type="NCBI Taxonomy" id="7227"/>
    <lineage>
        <taxon>Eukaryota</taxon>
        <taxon>Metazoa</taxon>
        <taxon>Ecdysozoa</taxon>
        <taxon>Arthropoda</taxon>
        <taxon>Hexapoda</taxon>
        <taxon>Insecta</taxon>
        <taxon>Pterygota</taxon>
        <taxon>Neoptera</taxon>
        <taxon>Endopterygota</taxon>
        <taxon>Diptera</taxon>
        <taxon>Brachycera</taxon>
        <taxon>Muscomorpha</taxon>
        <taxon>Ephydroidea</taxon>
        <taxon>Drosophilidae</taxon>
        <taxon>Drosophila</taxon>
        <taxon>Sophophora</taxon>
    </lineage>
</organism>